<protein>
    <recommendedName>
        <fullName>Probable beta-galactosidase C</fullName>
        <ecNumber>3.2.1.23</ecNumber>
    </recommendedName>
    <alternativeName>
        <fullName>Lactase C</fullName>
    </alternativeName>
</protein>
<evidence type="ECO:0000250" key="1"/>
<evidence type="ECO:0000255" key="2"/>
<evidence type="ECO:0000305" key="3"/>
<keyword id="KW-0119">Carbohydrate metabolism</keyword>
<keyword id="KW-1015">Disulfide bond</keyword>
<keyword id="KW-0325">Glycoprotein</keyword>
<keyword id="KW-0326">Glycosidase</keyword>
<keyword id="KW-0378">Hydrolase</keyword>
<keyword id="KW-0624">Polysaccharide degradation</keyword>
<keyword id="KW-1185">Reference proteome</keyword>
<keyword id="KW-0964">Secreted</keyword>
<keyword id="KW-0732">Signal</keyword>
<name>BGALC_ASPNC</name>
<dbReference type="EC" id="3.2.1.23"/>
<dbReference type="EMBL" id="AM270108">
    <property type="protein sequence ID" value="CAK44945.1"/>
    <property type="molecule type" value="Genomic_DNA"/>
</dbReference>
<dbReference type="SMR" id="A2QL84"/>
<dbReference type="CAZy" id="GH35">
    <property type="family name" value="Glycoside Hydrolase Family 35"/>
</dbReference>
<dbReference type="GlyCosmos" id="A2QL84">
    <property type="glycosylation" value="16 sites, No reported glycans"/>
</dbReference>
<dbReference type="EnsemblFungi" id="CAK44945">
    <property type="protein sequence ID" value="CAK44945"/>
    <property type="gene ID" value="An06g00290"/>
</dbReference>
<dbReference type="VEuPathDB" id="FungiDB:An06g00290"/>
<dbReference type="HOGENOM" id="CLU_005732_2_1_1"/>
<dbReference type="Proteomes" id="UP000006706">
    <property type="component" value="Chromosome 8ER"/>
</dbReference>
<dbReference type="GO" id="GO:0005576">
    <property type="term" value="C:extracellular region"/>
    <property type="evidence" value="ECO:0007669"/>
    <property type="project" value="UniProtKB-SubCell"/>
</dbReference>
<dbReference type="GO" id="GO:0004565">
    <property type="term" value="F:beta-galactosidase activity"/>
    <property type="evidence" value="ECO:0007669"/>
    <property type="project" value="UniProtKB-EC"/>
</dbReference>
<dbReference type="GO" id="GO:0000272">
    <property type="term" value="P:polysaccharide catabolic process"/>
    <property type="evidence" value="ECO:0007669"/>
    <property type="project" value="UniProtKB-KW"/>
</dbReference>
<dbReference type="FunFam" id="2.60.120.260:FF:000065">
    <property type="entry name" value="Beta-galactosidase A"/>
    <property type="match status" value="1"/>
</dbReference>
<dbReference type="FunFam" id="3.20.20.80:FF:000040">
    <property type="entry name" value="Beta-galactosidase A"/>
    <property type="match status" value="1"/>
</dbReference>
<dbReference type="Gene3D" id="2.102.20.10">
    <property type="entry name" value="Beta-galactosidase, domain 2"/>
    <property type="match status" value="1"/>
</dbReference>
<dbReference type="Gene3D" id="2.60.390.10">
    <property type="entry name" value="Beta-galactosidase, domain 3"/>
    <property type="match status" value="1"/>
</dbReference>
<dbReference type="Gene3D" id="2.60.120.260">
    <property type="entry name" value="Galactose-binding domain-like"/>
    <property type="match status" value="2"/>
</dbReference>
<dbReference type="Gene3D" id="3.20.20.80">
    <property type="entry name" value="Glycosidases"/>
    <property type="match status" value="1"/>
</dbReference>
<dbReference type="InterPro" id="IPR018954">
    <property type="entry name" value="Betagal_dom2"/>
</dbReference>
<dbReference type="InterPro" id="IPR037110">
    <property type="entry name" value="Betagal_dom2_sf"/>
</dbReference>
<dbReference type="InterPro" id="IPR025972">
    <property type="entry name" value="BetaGal_dom3"/>
</dbReference>
<dbReference type="InterPro" id="IPR036833">
    <property type="entry name" value="BetaGal_dom3_sf"/>
</dbReference>
<dbReference type="InterPro" id="IPR025300">
    <property type="entry name" value="BetaGal_jelly_roll_dom"/>
</dbReference>
<dbReference type="InterPro" id="IPR008979">
    <property type="entry name" value="Galactose-bd-like_sf"/>
</dbReference>
<dbReference type="InterPro" id="IPR031330">
    <property type="entry name" value="Gly_Hdrlase_35_cat"/>
</dbReference>
<dbReference type="InterPro" id="IPR001944">
    <property type="entry name" value="Glycoside_Hdrlase_35"/>
</dbReference>
<dbReference type="InterPro" id="IPR017853">
    <property type="entry name" value="Glycoside_hydrolase_SF"/>
</dbReference>
<dbReference type="PANTHER" id="PTHR23421">
    <property type="entry name" value="BETA-GALACTOSIDASE RELATED"/>
    <property type="match status" value="1"/>
</dbReference>
<dbReference type="Pfam" id="PF13364">
    <property type="entry name" value="BetaGal_ABD2"/>
    <property type="match status" value="2"/>
</dbReference>
<dbReference type="Pfam" id="PF10435">
    <property type="entry name" value="BetaGal_dom2"/>
    <property type="match status" value="1"/>
</dbReference>
<dbReference type="Pfam" id="PF13363">
    <property type="entry name" value="BetaGal_dom3"/>
    <property type="match status" value="1"/>
</dbReference>
<dbReference type="Pfam" id="PF01301">
    <property type="entry name" value="Glyco_hydro_35"/>
    <property type="match status" value="1"/>
</dbReference>
<dbReference type="PRINTS" id="PR00742">
    <property type="entry name" value="GLHYDRLASE35"/>
</dbReference>
<dbReference type="SMART" id="SM01029">
    <property type="entry name" value="BetaGal_dom2"/>
    <property type="match status" value="1"/>
</dbReference>
<dbReference type="SUPFAM" id="SSF51445">
    <property type="entry name" value="(Trans)glycosidases"/>
    <property type="match status" value="1"/>
</dbReference>
<dbReference type="SUPFAM" id="SSF117100">
    <property type="entry name" value="Beta-galactosidase LacA, domain 3"/>
    <property type="match status" value="1"/>
</dbReference>
<dbReference type="SUPFAM" id="SSF49785">
    <property type="entry name" value="Galactose-binding domain-like"/>
    <property type="match status" value="2"/>
</dbReference>
<dbReference type="SUPFAM" id="SSF51011">
    <property type="entry name" value="Glycosyl hydrolase domain"/>
    <property type="match status" value="1"/>
</dbReference>
<reference key="1">
    <citation type="journal article" date="2007" name="Nat. Biotechnol.">
        <title>Genome sequencing and analysis of the versatile cell factory Aspergillus niger CBS 513.88.</title>
        <authorList>
            <person name="Pel H.J."/>
            <person name="de Winde J.H."/>
            <person name="Archer D.B."/>
            <person name="Dyer P.S."/>
            <person name="Hofmann G."/>
            <person name="Schaap P.J."/>
            <person name="Turner G."/>
            <person name="de Vries R.P."/>
            <person name="Albang R."/>
            <person name="Albermann K."/>
            <person name="Andersen M.R."/>
            <person name="Bendtsen J.D."/>
            <person name="Benen J.A.E."/>
            <person name="van den Berg M."/>
            <person name="Breestraat S."/>
            <person name="Caddick M.X."/>
            <person name="Contreras R."/>
            <person name="Cornell M."/>
            <person name="Coutinho P.M."/>
            <person name="Danchin E.G.J."/>
            <person name="Debets A.J.M."/>
            <person name="Dekker P."/>
            <person name="van Dijck P.W.M."/>
            <person name="van Dijk A."/>
            <person name="Dijkhuizen L."/>
            <person name="Driessen A.J.M."/>
            <person name="d'Enfert C."/>
            <person name="Geysens S."/>
            <person name="Goosen C."/>
            <person name="Groot G.S.P."/>
            <person name="de Groot P.W.J."/>
            <person name="Guillemette T."/>
            <person name="Henrissat B."/>
            <person name="Herweijer M."/>
            <person name="van den Hombergh J.P.T.W."/>
            <person name="van den Hondel C.A.M.J.J."/>
            <person name="van der Heijden R.T.J.M."/>
            <person name="van der Kaaij R.M."/>
            <person name="Klis F.M."/>
            <person name="Kools H.J."/>
            <person name="Kubicek C.P."/>
            <person name="van Kuyk P.A."/>
            <person name="Lauber J."/>
            <person name="Lu X."/>
            <person name="van der Maarel M.J.E.C."/>
            <person name="Meulenberg R."/>
            <person name="Menke H."/>
            <person name="Mortimer M.A."/>
            <person name="Nielsen J."/>
            <person name="Oliver S.G."/>
            <person name="Olsthoorn M."/>
            <person name="Pal K."/>
            <person name="van Peij N.N.M.E."/>
            <person name="Ram A.F.J."/>
            <person name="Rinas U."/>
            <person name="Roubos J.A."/>
            <person name="Sagt C.M.J."/>
            <person name="Schmoll M."/>
            <person name="Sun J."/>
            <person name="Ussery D."/>
            <person name="Varga J."/>
            <person name="Vervecken W."/>
            <person name="van de Vondervoort P.J.J."/>
            <person name="Wedler H."/>
            <person name="Woesten H.A.B."/>
            <person name="Zeng A.-P."/>
            <person name="van Ooyen A.J.J."/>
            <person name="Visser J."/>
            <person name="Stam H."/>
        </authorList>
    </citation>
    <scope>NUCLEOTIDE SEQUENCE [LARGE SCALE GENOMIC DNA]</scope>
    <source>
        <strain>ATCC MYA-4892 / CBS 513.88 / FGSC A1513</strain>
    </source>
</reference>
<gene>
    <name type="primary">lacC</name>
    <name type="ORF">An06g00290</name>
</gene>
<organism>
    <name type="scientific">Aspergillus niger (strain ATCC MYA-4892 / CBS 513.88 / FGSC A1513)</name>
    <dbReference type="NCBI Taxonomy" id="425011"/>
    <lineage>
        <taxon>Eukaryota</taxon>
        <taxon>Fungi</taxon>
        <taxon>Dikarya</taxon>
        <taxon>Ascomycota</taxon>
        <taxon>Pezizomycotina</taxon>
        <taxon>Eurotiomycetes</taxon>
        <taxon>Eurotiomycetidae</taxon>
        <taxon>Eurotiales</taxon>
        <taxon>Aspergillaceae</taxon>
        <taxon>Aspergillus</taxon>
        <taxon>Aspergillus subgen. Circumdati</taxon>
    </lineage>
</organism>
<feature type="signal peptide" evidence="2">
    <location>
        <begin position="1"/>
        <end position="19"/>
    </location>
</feature>
<feature type="chain" id="PRO_5000220037" description="Probable beta-galactosidase C">
    <location>
        <begin position="20"/>
        <end position="994"/>
    </location>
</feature>
<feature type="active site" description="Proton donor" evidence="2">
    <location>
        <position position="184"/>
    </location>
</feature>
<feature type="active site" description="Nucleophile" evidence="2">
    <location>
        <position position="283"/>
    </location>
</feature>
<feature type="binding site" evidence="1">
    <location>
        <position position="78"/>
    </location>
    <ligand>
        <name>substrate</name>
    </ligand>
</feature>
<feature type="binding site" evidence="1">
    <location>
        <position position="123"/>
    </location>
    <ligand>
        <name>substrate</name>
    </ligand>
</feature>
<feature type="binding site" evidence="1">
    <location>
        <position position="124"/>
    </location>
    <ligand>
        <name>substrate</name>
    </ligand>
</feature>
<feature type="binding site" evidence="1">
    <location>
        <position position="125"/>
    </location>
    <ligand>
        <name>substrate</name>
    </ligand>
</feature>
<feature type="binding site" evidence="1">
    <location>
        <position position="183"/>
    </location>
    <ligand>
        <name>substrate</name>
    </ligand>
</feature>
<feature type="binding site" evidence="1">
    <location>
        <position position="247"/>
    </location>
    <ligand>
        <name>substrate</name>
    </ligand>
</feature>
<feature type="binding site" evidence="1">
    <location>
        <position position="350"/>
    </location>
    <ligand>
        <name>substrate</name>
    </ligand>
</feature>
<feature type="glycosylation site" description="N-linked (GlcNAc...) asparagine" evidence="2">
    <location>
        <position position="88"/>
    </location>
</feature>
<feature type="glycosylation site" description="N-linked (GlcNAc...) asparagine" evidence="2">
    <location>
        <position position="272"/>
    </location>
</feature>
<feature type="glycosylation site" description="N-linked (GlcNAc...) asparagine" evidence="2">
    <location>
        <position position="388"/>
    </location>
</feature>
<feature type="glycosylation site" description="N-linked (GlcNAc...) asparagine" evidence="2">
    <location>
        <position position="407"/>
    </location>
</feature>
<feature type="glycosylation site" description="N-linked (GlcNAc...) asparagine" evidence="2">
    <location>
        <position position="433"/>
    </location>
</feature>
<feature type="glycosylation site" description="N-linked (GlcNAc...) asparagine" evidence="2">
    <location>
        <position position="500"/>
    </location>
</feature>
<feature type="glycosylation site" description="N-linked (GlcNAc...) asparagine" evidence="2">
    <location>
        <position position="514"/>
    </location>
</feature>
<feature type="glycosylation site" description="N-linked (GlcNAc...) asparagine" evidence="2">
    <location>
        <position position="521"/>
    </location>
</feature>
<feature type="glycosylation site" description="N-linked (GlcNAc...) asparagine" evidence="2">
    <location>
        <position position="584"/>
    </location>
</feature>
<feature type="glycosylation site" description="N-linked (GlcNAc...) asparagine" evidence="2">
    <location>
        <position position="600"/>
    </location>
</feature>
<feature type="glycosylation site" description="N-linked (GlcNAc...) asparagine" evidence="2">
    <location>
        <position position="674"/>
    </location>
</feature>
<feature type="glycosylation site" description="N-linked (GlcNAc...) asparagine" evidence="2">
    <location>
        <position position="712"/>
    </location>
</feature>
<feature type="glycosylation site" description="N-linked (GlcNAc...) asparagine" evidence="2">
    <location>
        <position position="717"/>
    </location>
</feature>
<feature type="glycosylation site" description="N-linked (GlcNAc...) asparagine" evidence="2">
    <location>
        <position position="757"/>
    </location>
</feature>
<feature type="glycosylation site" description="N-linked (GlcNAc...) asparagine" evidence="2">
    <location>
        <position position="861"/>
    </location>
</feature>
<feature type="glycosylation site" description="N-linked (GlcNAc...) asparagine" evidence="2">
    <location>
        <position position="969"/>
    </location>
</feature>
<feature type="disulfide bond" evidence="1">
    <location>
        <begin position="253"/>
        <end position="301"/>
    </location>
</feature>
<proteinExistence type="inferred from homology"/>
<sequence>MKLQSILSCWAILVAQIWATTDGLTDLVAWDPYSLTVNGNRLFVYSGEFHYPRLPVPEMWLDVFQKMRAHGFNAVSLYFFWDYHSPINGTYDFETGAHNIQRLFDYAQEAGIYIIARAGPYCNAEFNGGGLALYLSDGSGGELRTSDATYHQAWTPWIERIGKIIADNSITNGGPVILNQIENELQETTHSASNTLVEYMEQIEEAFRAAGVDVPFTSNEKGQRSRSWSTDYEDVGGAVNVYGLDSYPGGLSCTNPSTGFSVLRNYYQWFQNTSYTQPEYLPEFEGGWFSAWGADSFYDQCTSELSPQFADVYYKNNIGQRVTLQNLYMLYGGTNWGHLAAPVVYTSYDYSAPLRETRQIRDKLSQTKLVGLFTRVSSGLLGVEMEGNGTSYTSTTSAYTWVLRNPNTTAGFYVVQQDTTSSQTDITFSLNVNTSAGAFTLPNINLQGRQSKVISTDYPLGHSTLLYVSTDIATYGTFGDTDVVVLYARSGQVVSFAFKNTTKLTFEEYGDSVNLTSSSGNRTITSYTYTQGSGTSVVKFSNGAIFYLVETETAFRFWAPPTTTDPYVTAEQQIFVLGPYLVRNVSISGSVVDLVGDNDNATTVEVFAGSPAKAVKWNGKEITVTKTDYGSLVGSIGGADSSSITIPSLTGWKVRDSLPEIQSSYDDSKWTVCNKTTTLSPVDPLSLPVLFASDYGYYTGIKIYRGRFDGTNVTGANLTAQGGLAFGWNVWLNGDLVASLPGDADETSSNAAIDFSNHTLKQTDNLLTVVIDYTGHDETSTGDGVENPRGLLGATLNGGSFTSWKIQGNAGGAAGAYELDPVRAPMNEGGLLAERQGWHLPGYKAKSSDGWTDGSPLDGLNKSGVAFYLTTFTLDLPKKYDVPLGIQFTSPSTVDPVRIQLFINGYQYGKYVPYLGPQTTFPIPPGIINNRDKNTIGLSLWAQTDAGAKLENIELISYGAYESGFDAGNGTGFDLNGAKLGYQPEWTEARAKYT</sequence>
<accession>A2QL84</accession>
<comment type="function">
    <text evidence="1">Cleaves beta-linked terminal galactosyl residues from gangliosides, glycoproteins, and glycosaminoglycans.</text>
</comment>
<comment type="catalytic activity">
    <reaction>
        <text>Hydrolysis of terminal non-reducing beta-D-galactose residues in beta-D-galactosides.</text>
        <dbReference type="EC" id="3.2.1.23"/>
    </reaction>
</comment>
<comment type="subcellular location">
    <subcellularLocation>
        <location evidence="1">Secreted</location>
    </subcellularLocation>
</comment>
<comment type="similarity">
    <text evidence="3">Belongs to the glycosyl hydrolase 35 family.</text>
</comment>